<organism>
    <name type="scientific">Streptococcus equi subsp. equi (strain 4047)</name>
    <dbReference type="NCBI Taxonomy" id="553482"/>
    <lineage>
        <taxon>Bacteria</taxon>
        <taxon>Bacillati</taxon>
        <taxon>Bacillota</taxon>
        <taxon>Bacilli</taxon>
        <taxon>Lactobacillales</taxon>
        <taxon>Streptococcaceae</taxon>
        <taxon>Streptococcus</taxon>
    </lineage>
</organism>
<protein>
    <recommendedName>
        <fullName evidence="1">Xaa-Pro dipeptidyl-peptidase</fullName>
        <ecNumber evidence="1">3.4.14.11</ecNumber>
    </recommendedName>
    <alternativeName>
        <fullName evidence="1">X-Pro dipeptidyl-peptidase</fullName>
    </alternativeName>
    <alternativeName>
        <fullName evidence="1">X-prolyl-dipeptidyl aminopeptidase</fullName>
        <shortName evidence="1">X-PDAP</shortName>
    </alternativeName>
</protein>
<evidence type="ECO:0000255" key="1">
    <source>
        <dbReference type="HAMAP-Rule" id="MF_00698"/>
    </source>
</evidence>
<dbReference type="EC" id="3.4.14.11" evidence="1"/>
<dbReference type="EMBL" id="FM204883">
    <property type="protein sequence ID" value="CAW92524.1"/>
    <property type="molecule type" value="Genomic_DNA"/>
</dbReference>
<dbReference type="RefSeq" id="WP_012679014.1">
    <property type="nucleotide sequence ID" value="NC_012471.1"/>
</dbReference>
<dbReference type="SMR" id="C0MAI3"/>
<dbReference type="ESTHER" id="stre4-pepx">
    <property type="family name" value="Lactobacillus_peptidase"/>
</dbReference>
<dbReference type="KEGG" id="seu:SEQ_0383"/>
<dbReference type="HOGENOM" id="CLU_011800_0_0_9"/>
<dbReference type="OrthoDB" id="319764at2"/>
<dbReference type="Proteomes" id="UP000001365">
    <property type="component" value="Chromosome"/>
</dbReference>
<dbReference type="GO" id="GO:0005737">
    <property type="term" value="C:cytoplasm"/>
    <property type="evidence" value="ECO:0007669"/>
    <property type="project" value="UniProtKB-SubCell"/>
</dbReference>
<dbReference type="GO" id="GO:0004177">
    <property type="term" value="F:aminopeptidase activity"/>
    <property type="evidence" value="ECO:0007669"/>
    <property type="project" value="UniProtKB-KW"/>
</dbReference>
<dbReference type="GO" id="GO:0008239">
    <property type="term" value="F:dipeptidyl-peptidase activity"/>
    <property type="evidence" value="ECO:0007669"/>
    <property type="project" value="UniProtKB-UniRule"/>
</dbReference>
<dbReference type="GO" id="GO:0008236">
    <property type="term" value="F:serine-type peptidase activity"/>
    <property type="evidence" value="ECO:0007669"/>
    <property type="project" value="UniProtKB-KW"/>
</dbReference>
<dbReference type="GO" id="GO:0006508">
    <property type="term" value="P:proteolysis"/>
    <property type="evidence" value="ECO:0007669"/>
    <property type="project" value="UniProtKB-KW"/>
</dbReference>
<dbReference type="Gene3D" id="1.10.246.70">
    <property type="match status" value="1"/>
</dbReference>
<dbReference type="Gene3D" id="3.40.50.1820">
    <property type="entry name" value="alpha/beta hydrolase"/>
    <property type="match status" value="1"/>
</dbReference>
<dbReference type="Gene3D" id="2.60.120.260">
    <property type="entry name" value="Galactose-binding domain-like"/>
    <property type="match status" value="1"/>
</dbReference>
<dbReference type="HAMAP" id="MF_00698">
    <property type="entry name" value="Aminopeptidase_S15"/>
    <property type="match status" value="1"/>
</dbReference>
<dbReference type="InterPro" id="IPR029058">
    <property type="entry name" value="AB_hydrolase_fold"/>
</dbReference>
<dbReference type="InterPro" id="IPR008979">
    <property type="entry name" value="Galactose-bd-like_sf"/>
</dbReference>
<dbReference type="InterPro" id="IPR008252">
    <property type="entry name" value="Pept_S15_Xpro"/>
</dbReference>
<dbReference type="InterPro" id="IPR015251">
    <property type="entry name" value="PepX_N_dom"/>
</dbReference>
<dbReference type="InterPro" id="IPR036313">
    <property type="entry name" value="PepX_N_dom_sf"/>
</dbReference>
<dbReference type="InterPro" id="IPR000383">
    <property type="entry name" value="Xaa-Pro-like_dom"/>
</dbReference>
<dbReference type="InterPro" id="IPR013736">
    <property type="entry name" value="Xaa-Pro_dipept_C"/>
</dbReference>
<dbReference type="InterPro" id="IPR050585">
    <property type="entry name" value="Xaa-Pro_dipeptidyl-ppase/CocE"/>
</dbReference>
<dbReference type="NCBIfam" id="NF003783">
    <property type="entry name" value="PRK05371.1-4"/>
    <property type="match status" value="1"/>
</dbReference>
<dbReference type="PANTHER" id="PTHR43056:SF10">
    <property type="entry name" value="COCE_NOND FAMILY, PUTATIVE (AFU_ORTHOLOGUE AFUA_7G00600)-RELATED"/>
    <property type="match status" value="1"/>
</dbReference>
<dbReference type="PANTHER" id="PTHR43056">
    <property type="entry name" value="PEPTIDASE S9 PROLYL OLIGOPEPTIDASE"/>
    <property type="match status" value="1"/>
</dbReference>
<dbReference type="Pfam" id="PF02129">
    <property type="entry name" value="Peptidase_S15"/>
    <property type="match status" value="1"/>
</dbReference>
<dbReference type="Pfam" id="PF08530">
    <property type="entry name" value="PepX_C"/>
    <property type="match status" value="1"/>
</dbReference>
<dbReference type="Pfam" id="PF09168">
    <property type="entry name" value="PepX_N"/>
    <property type="match status" value="1"/>
</dbReference>
<dbReference type="PRINTS" id="PR00923">
    <property type="entry name" value="LACTOPTASE"/>
</dbReference>
<dbReference type="SMART" id="SM00939">
    <property type="entry name" value="PepX_C"/>
    <property type="match status" value="1"/>
</dbReference>
<dbReference type="SMART" id="SM00940">
    <property type="entry name" value="PepX_N"/>
    <property type="match status" value="1"/>
</dbReference>
<dbReference type="SUPFAM" id="SSF53474">
    <property type="entry name" value="alpha/beta-Hydrolases"/>
    <property type="match status" value="1"/>
</dbReference>
<dbReference type="SUPFAM" id="SSF49785">
    <property type="entry name" value="Galactose-binding domain-like"/>
    <property type="match status" value="1"/>
</dbReference>
<dbReference type="SUPFAM" id="SSF81761">
    <property type="entry name" value="X-Prolyl dipeptidyl aminopeptidase PepX, N-terminal domain"/>
    <property type="match status" value="1"/>
</dbReference>
<name>PEPX_STRE4</name>
<feature type="chain" id="PRO_1000192756" description="Xaa-Pro dipeptidyl-peptidase">
    <location>
        <begin position="1"/>
        <end position="761"/>
    </location>
</feature>
<feature type="active site" description="Charge relay system" evidence="1">
    <location>
        <position position="349"/>
    </location>
</feature>
<feature type="active site" description="Charge relay system" evidence="1">
    <location>
        <position position="469"/>
    </location>
</feature>
<feature type="active site" description="Charge relay system" evidence="1">
    <location>
        <position position="499"/>
    </location>
</feature>
<proteinExistence type="inferred from homology"/>
<gene>
    <name evidence="1" type="primary">pepX</name>
    <name type="ordered locus">SEQ_0383</name>
</gene>
<accession>C0MAI3</accession>
<sequence>MRYNQLSYIPTSLETAVAELQALGFAVQQEQAPKENFAIFLRKLFFHFQDTDYPLSHMIASKDLDLLTFLTSDATLTKEVFDLVALQVLGFIPAVDFTDAQDFIQKIGFPIVFDSQQLLLNLHQLLATRQKSGVTLIDSLVSQGLLPMDNCYHYFNGKALATFDTTSLIREVVYVEAPLDTDQDGQLDLIKVNIIRPKASTAIPSMMTASPYHQGINETANDKKLHRMEGELSPKAPRRITVEPTDFQPLATKPSRLPVNECQETFSHISSYTLNDYFLARGFANLYVSGVGTAGSTGFMTSGDYAQIESFKAVIDWLNGRATAYTSHKRDYQIKADWSNGLVATTGKSYLGTMSTGLATTGVDGLAVIIAEAAISSWYDYYRENGLVCSPGGYPGEDLDVLTELTYSRNLLPGDYLRHNDHYQQLLSQQSQALERQSGNYNQFWHDRNYLPQADRIKCEVVYTHGLQDWNVKPRQVYNIFNALPDSLGKHLFLHHGEHVYMHNWQSIDFREAMNALLCQKMLGQNNGFTLPTIIWQDNQKEQTWKELTAFGGHSKRQIALGDDHVLIDNHYGEEDFKRYSKDFRAFKAELFEGKANQAVIDILLEEDLPINGQACLKLKLKSSENKGILAAQLLDYGKKKRFADIPAILELDSIDNGQQFAREALKELPFKDSPYRVVTKGVLNLQHRSDLLTIEDIPNDQWMTITFHLQPTIYHMAKGDTLRVVLYTTDFEHTIRDNSNYALTLDLEQSYLLIPTDEEE</sequence>
<reference key="1">
    <citation type="journal article" date="2009" name="PLoS Pathog.">
        <title>Genomic evidence for the evolution of Streptococcus equi: host restriction, increased virulence, and genetic exchange with human pathogens.</title>
        <authorList>
            <person name="Holden M.T.G."/>
            <person name="Heather Z."/>
            <person name="Paillot R."/>
            <person name="Steward K.F."/>
            <person name="Webb K."/>
            <person name="Ainslie F."/>
            <person name="Jourdan T."/>
            <person name="Bason N.C."/>
            <person name="Holroyd N.E."/>
            <person name="Mungall K."/>
            <person name="Quail M.A."/>
            <person name="Sanders M."/>
            <person name="Simmonds M."/>
            <person name="Willey D."/>
            <person name="Brooks K."/>
            <person name="Aanensen D.M."/>
            <person name="Spratt B.G."/>
            <person name="Jolley K.A."/>
            <person name="Maiden M.C.J."/>
            <person name="Kehoe M."/>
            <person name="Chanter N."/>
            <person name="Bentley S.D."/>
            <person name="Robinson C."/>
            <person name="Maskell D.J."/>
            <person name="Parkhill J."/>
            <person name="Waller A.S."/>
        </authorList>
    </citation>
    <scope>NUCLEOTIDE SEQUENCE [LARGE SCALE GENOMIC DNA]</scope>
    <source>
        <strain>4047</strain>
    </source>
</reference>
<keyword id="KW-0031">Aminopeptidase</keyword>
<keyword id="KW-0963">Cytoplasm</keyword>
<keyword id="KW-0378">Hydrolase</keyword>
<keyword id="KW-0645">Protease</keyword>
<keyword id="KW-0720">Serine protease</keyword>
<comment type="function">
    <text evidence="1">Removes N-terminal dipeptides sequentially from polypeptides having unsubstituted N-termini provided that the penultimate residue is proline.</text>
</comment>
<comment type="catalytic activity">
    <reaction evidence="1">
        <text>Hydrolyzes Xaa-Pro-|- bonds to release unblocked, N-terminal dipeptides from substrates including Ala-Pro-|-p-nitroanilide and (sequentially) Tyr-Pro-|-Phe-Pro-|-Gly-Pro-|-Ile.</text>
        <dbReference type="EC" id="3.4.14.11"/>
    </reaction>
</comment>
<comment type="subunit">
    <text evidence="1">Homodimer.</text>
</comment>
<comment type="subcellular location">
    <subcellularLocation>
        <location evidence="1">Cytoplasm</location>
    </subcellularLocation>
</comment>
<comment type="similarity">
    <text evidence="1">Belongs to the peptidase S15 family.</text>
</comment>